<gene>
    <name evidence="1" type="primary">arnD</name>
    <name type="ordered locus">YpAngola_A2609</name>
</gene>
<protein>
    <recommendedName>
        <fullName evidence="1">Probable 4-deoxy-4-formamido-L-arabinose-phosphoundecaprenol deformylase ArnD</fullName>
        <ecNumber evidence="1">3.5.1.n3</ecNumber>
    </recommendedName>
</protein>
<dbReference type="EC" id="3.5.1.n3" evidence="1"/>
<dbReference type="EMBL" id="CP000901">
    <property type="protein sequence ID" value="ABX85183.1"/>
    <property type="molecule type" value="Genomic_DNA"/>
</dbReference>
<dbReference type="RefSeq" id="WP_002211822.1">
    <property type="nucleotide sequence ID" value="NZ_CP009935.1"/>
</dbReference>
<dbReference type="SMR" id="A9R092"/>
<dbReference type="GeneID" id="57976258"/>
<dbReference type="KEGG" id="ypg:YpAngola_A2609"/>
<dbReference type="PATRIC" id="fig|349746.12.peg.3636"/>
<dbReference type="UniPathway" id="UPA00030"/>
<dbReference type="UniPathway" id="UPA00036">
    <property type="reaction ID" value="UER00496"/>
</dbReference>
<dbReference type="GO" id="GO:0016020">
    <property type="term" value="C:membrane"/>
    <property type="evidence" value="ECO:0007669"/>
    <property type="project" value="GOC"/>
</dbReference>
<dbReference type="GO" id="GO:0016811">
    <property type="term" value="F:hydrolase activity, acting on carbon-nitrogen (but not peptide) bonds, in linear amides"/>
    <property type="evidence" value="ECO:0007669"/>
    <property type="project" value="UniProtKB-UniRule"/>
</dbReference>
<dbReference type="GO" id="GO:0036108">
    <property type="term" value="P:4-amino-4-deoxy-alpha-L-arabinopyranosyl undecaprenyl phosphate biosynthetic process"/>
    <property type="evidence" value="ECO:0007669"/>
    <property type="project" value="UniProtKB-UniRule"/>
</dbReference>
<dbReference type="GO" id="GO:0009245">
    <property type="term" value="P:lipid A biosynthetic process"/>
    <property type="evidence" value="ECO:0007669"/>
    <property type="project" value="UniProtKB-UniRule"/>
</dbReference>
<dbReference type="GO" id="GO:0009103">
    <property type="term" value="P:lipopolysaccharide biosynthetic process"/>
    <property type="evidence" value="ECO:0007669"/>
    <property type="project" value="UniProtKB-UniRule"/>
</dbReference>
<dbReference type="GO" id="GO:0046677">
    <property type="term" value="P:response to antibiotic"/>
    <property type="evidence" value="ECO:0007669"/>
    <property type="project" value="UniProtKB-KW"/>
</dbReference>
<dbReference type="CDD" id="cd10939">
    <property type="entry name" value="CE4_ArnD"/>
    <property type="match status" value="1"/>
</dbReference>
<dbReference type="Gene3D" id="3.20.20.370">
    <property type="entry name" value="Glycoside hydrolase/deacetylase"/>
    <property type="match status" value="1"/>
</dbReference>
<dbReference type="HAMAP" id="MF_01870">
    <property type="entry name" value="ArnD"/>
    <property type="match status" value="1"/>
</dbReference>
<dbReference type="InterPro" id="IPR023557">
    <property type="entry name" value="ArnD"/>
</dbReference>
<dbReference type="InterPro" id="IPR011330">
    <property type="entry name" value="Glyco_hydro/deAcase_b/a-brl"/>
</dbReference>
<dbReference type="InterPro" id="IPR002509">
    <property type="entry name" value="NODB_dom"/>
</dbReference>
<dbReference type="InterPro" id="IPR050248">
    <property type="entry name" value="Polysacc_deacetylase_ArnD"/>
</dbReference>
<dbReference type="NCBIfam" id="NF011923">
    <property type="entry name" value="PRK15394.1"/>
    <property type="match status" value="1"/>
</dbReference>
<dbReference type="PANTHER" id="PTHR10587:SF137">
    <property type="entry name" value="4-DEOXY-4-FORMAMIDO-L-ARABINOSE-PHOSPHOUNDECAPRENOL DEFORMYLASE ARND-RELATED"/>
    <property type="match status" value="1"/>
</dbReference>
<dbReference type="PANTHER" id="PTHR10587">
    <property type="entry name" value="GLYCOSYL TRANSFERASE-RELATED"/>
    <property type="match status" value="1"/>
</dbReference>
<dbReference type="Pfam" id="PF01522">
    <property type="entry name" value="Polysacc_deac_1"/>
    <property type="match status" value="1"/>
</dbReference>
<dbReference type="SUPFAM" id="SSF88713">
    <property type="entry name" value="Glycoside hydrolase/deacetylase"/>
    <property type="match status" value="1"/>
</dbReference>
<dbReference type="PROSITE" id="PS51677">
    <property type="entry name" value="NODB"/>
    <property type="match status" value="1"/>
</dbReference>
<comment type="function">
    <text evidence="1">Catalyzes the deformylation of 4-deoxy-4-formamido-L-arabinose-phosphoundecaprenol to 4-amino-4-deoxy-L-arabinose-phosphoundecaprenol. The modified arabinose is attached to lipid A and is required for resistance to polymyxin and cationic antimicrobial peptides.</text>
</comment>
<comment type="catalytic activity">
    <reaction evidence="1">
        <text>4-deoxy-4-formamido-alpha-L-arabinopyranosyl di-trans,octa-cis-undecaprenyl phosphate + H2O = 4-amino-4-deoxy-alpha-L-arabinopyranosyl di-trans,octa-cis-undecaprenyl phosphate + formate</text>
        <dbReference type="Rhea" id="RHEA:27734"/>
        <dbReference type="ChEBI" id="CHEBI:15377"/>
        <dbReference type="ChEBI" id="CHEBI:15740"/>
        <dbReference type="ChEBI" id="CHEBI:58909"/>
        <dbReference type="ChEBI" id="CHEBI:60463"/>
        <dbReference type="EC" id="3.5.1.n3"/>
    </reaction>
</comment>
<comment type="pathway">
    <text evidence="1">Glycolipid biosynthesis; 4-amino-4-deoxy-alpha-L-arabinose undecaprenyl phosphate biosynthesis; 4-amino-4-deoxy-alpha-L-arabinose undecaprenyl phosphate from UDP-4-deoxy-4-formamido-beta-L-arabinose and undecaprenyl phosphate: step 2/2.</text>
</comment>
<comment type="pathway">
    <text evidence="1">Bacterial outer membrane biogenesis; lipopolysaccharide biosynthesis.</text>
</comment>
<comment type="similarity">
    <text evidence="1">Belongs to the polysaccharide deacetylase family. ArnD deformylase subfamily.</text>
</comment>
<organism>
    <name type="scientific">Yersinia pestis bv. Antiqua (strain Angola)</name>
    <dbReference type="NCBI Taxonomy" id="349746"/>
    <lineage>
        <taxon>Bacteria</taxon>
        <taxon>Pseudomonadati</taxon>
        <taxon>Pseudomonadota</taxon>
        <taxon>Gammaproteobacteria</taxon>
        <taxon>Enterobacterales</taxon>
        <taxon>Yersiniaceae</taxon>
        <taxon>Yersinia</taxon>
    </lineage>
</organism>
<keyword id="KW-0046">Antibiotic resistance</keyword>
<keyword id="KW-0378">Hydrolase</keyword>
<keyword id="KW-0441">Lipid A biosynthesis</keyword>
<keyword id="KW-0444">Lipid biosynthesis</keyword>
<keyword id="KW-0443">Lipid metabolism</keyword>
<keyword id="KW-0448">Lipopolysaccharide biosynthesis</keyword>
<proteinExistence type="inferred from homology"/>
<accession>A9R092</accession>
<reference key="1">
    <citation type="journal article" date="2010" name="J. Bacteriol.">
        <title>Genome sequence of the deep-rooted Yersinia pestis strain Angola reveals new insights into the evolution and pangenome of the plague bacterium.</title>
        <authorList>
            <person name="Eppinger M."/>
            <person name="Worsham P.L."/>
            <person name="Nikolich M.P."/>
            <person name="Riley D.R."/>
            <person name="Sebastian Y."/>
            <person name="Mou S."/>
            <person name="Achtman M."/>
            <person name="Lindler L.E."/>
            <person name="Ravel J."/>
        </authorList>
    </citation>
    <scope>NUCLEOTIDE SEQUENCE [LARGE SCALE GENOMIC DNA]</scope>
    <source>
        <strain>Angola</strain>
    </source>
</reference>
<sequence length="301" mass="33504">MKQVGLRIDVDTYRGTQYGVPSLLTVLEKHDIRASFFFSVGPDNMGRHLWRLFRPRFLWKMLRSNAASLYGWDILLAGTAWPGKKIAKDFGPLMKAAAMAGHEVGLHAWDHQGWQANVASWSQQQLTEQVQRGVDTLQQSIGQPISCSAAAGWRADERVLAVKQQFDFSYNSDCRGTHPFRPLLPNGSLGSVQIPVTLPTYDEVVGGEVQAENFNDFIIDAILRDSGVSVYTIHAEVEGMSQAAMFEQLLMRAKQQDIEFCPLSKLLPSDLQLLPVGKVIRAAFPGREGWLGCQSDIKDAE</sequence>
<feature type="chain" id="PRO_0000383553" description="Probable 4-deoxy-4-formamido-L-arabinose-phosphoundecaprenol deformylase ArnD">
    <location>
        <begin position="1"/>
        <end position="301"/>
    </location>
</feature>
<feature type="domain" description="NodB homology" evidence="1">
    <location>
        <begin position="2"/>
        <end position="261"/>
    </location>
</feature>
<name>ARND_YERPG</name>
<evidence type="ECO:0000255" key="1">
    <source>
        <dbReference type="HAMAP-Rule" id="MF_01870"/>
    </source>
</evidence>